<evidence type="ECO:0000255" key="1">
    <source>
        <dbReference type="HAMAP-Rule" id="MF_01569"/>
    </source>
</evidence>
<name>SYP_LATSS</name>
<accession>Q38W72</accession>
<keyword id="KW-0030">Aminoacyl-tRNA synthetase</keyword>
<keyword id="KW-0067">ATP-binding</keyword>
<keyword id="KW-0963">Cytoplasm</keyword>
<keyword id="KW-0436">Ligase</keyword>
<keyword id="KW-0547">Nucleotide-binding</keyword>
<keyword id="KW-0648">Protein biosynthesis</keyword>
<keyword id="KW-1185">Reference proteome</keyword>
<protein>
    <recommendedName>
        <fullName evidence="1">Proline--tRNA ligase</fullName>
        <ecNumber evidence="1">6.1.1.15</ecNumber>
    </recommendedName>
    <alternativeName>
        <fullName evidence="1">Prolyl-tRNA synthetase</fullName>
        <shortName evidence="1">ProRS</shortName>
    </alternativeName>
</protein>
<proteinExistence type="inferred from homology"/>
<organism>
    <name type="scientific">Latilactobacillus sakei subsp. sakei (strain 23K)</name>
    <name type="common">Lactobacillus sakei subsp. sakei</name>
    <dbReference type="NCBI Taxonomy" id="314315"/>
    <lineage>
        <taxon>Bacteria</taxon>
        <taxon>Bacillati</taxon>
        <taxon>Bacillota</taxon>
        <taxon>Bacilli</taxon>
        <taxon>Lactobacillales</taxon>
        <taxon>Lactobacillaceae</taxon>
        <taxon>Latilactobacillus</taxon>
    </lineage>
</organism>
<sequence length="569" mass="63158">MKQSKLFIPTLKEVPNSAEAKSHRMMLRAGYIHQVSAGVYSYLPLAYRVLENIQAIIKDEMSKIDAVQMQMPGILPAELWEESGRYATYGPNLFKFKDRHSRDFILGPTHEETFADLVRNNIKSYKKLPLTLYQIQTKYRDEDRPRYGLLRGREFIMQDAYSFSANEADLDTTFQQMRQAYTNIFERCGLDFRAIVGDAGAMGGKDSMEFSAIAEIGEDTIVYSDQSDYAANLEMATGVRPGQSSTDVQLEMEKVATGDAHSIEEVAARLEVPAQKIIKSVLFIADEKPVLVLVRGDYEVNDVKLKNFLDADFLDLATAEQVQATMNAPMGSIGPVNAPEDVQIVADYSVEALVNAVVGANEADHHFLNVNSKRDFNVADYADLRFVQEGETAPDGEGKLQFTKGIEIGHIFKLGTRYTEQFGATFLDENGRAKPIIMGSYGIGVSRLLSAITEQQADENGLVWPSAIAPYDLHVVPVNVKDDAQVELAEQIEGLLEEAGYSVLVDDRKERAGVKFADSDLIGLPIRITVGKKAAEEIVEVKLRKTGETLEVKKDELINSLSILLASEK</sequence>
<reference key="1">
    <citation type="journal article" date="2005" name="Nat. Biotechnol.">
        <title>The complete genome sequence of the meat-borne lactic acid bacterium Lactobacillus sakei 23K.</title>
        <authorList>
            <person name="Chaillou S."/>
            <person name="Champomier-Verges M.-C."/>
            <person name="Cornet M."/>
            <person name="Crutz-Le Coq A.-M."/>
            <person name="Dudez A.-M."/>
            <person name="Martin V."/>
            <person name="Beaufils S."/>
            <person name="Darbon-Rongere E."/>
            <person name="Bossy R."/>
            <person name="Loux V."/>
            <person name="Zagorec M."/>
        </authorList>
    </citation>
    <scope>NUCLEOTIDE SEQUENCE [LARGE SCALE GENOMIC DNA]</scope>
    <source>
        <strain>23K</strain>
    </source>
</reference>
<comment type="function">
    <text evidence="1">Catalyzes the attachment of proline to tRNA(Pro) in a two-step reaction: proline is first activated by ATP to form Pro-AMP and then transferred to the acceptor end of tRNA(Pro). As ProRS can inadvertently accommodate and process non-cognate amino acids such as alanine and cysteine, to avoid such errors it has two additional distinct editing activities against alanine. One activity is designated as 'pretransfer' editing and involves the tRNA(Pro)-independent hydrolysis of activated Ala-AMP. The other activity is designated 'posttransfer' editing and involves deacylation of mischarged Ala-tRNA(Pro). The misacylated Cys-tRNA(Pro) is not edited by ProRS.</text>
</comment>
<comment type="catalytic activity">
    <reaction evidence="1">
        <text>tRNA(Pro) + L-proline + ATP = L-prolyl-tRNA(Pro) + AMP + diphosphate</text>
        <dbReference type="Rhea" id="RHEA:14305"/>
        <dbReference type="Rhea" id="RHEA-COMP:9700"/>
        <dbReference type="Rhea" id="RHEA-COMP:9702"/>
        <dbReference type="ChEBI" id="CHEBI:30616"/>
        <dbReference type="ChEBI" id="CHEBI:33019"/>
        <dbReference type="ChEBI" id="CHEBI:60039"/>
        <dbReference type="ChEBI" id="CHEBI:78442"/>
        <dbReference type="ChEBI" id="CHEBI:78532"/>
        <dbReference type="ChEBI" id="CHEBI:456215"/>
        <dbReference type="EC" id="6.1.1.15"/>
    </reaction>
</comment>
<comment type="subunit">
    <text evidence="1">Homodimer.</text>
</comment>
<comment type="subcellular location">
    <subcellularLocation>
        <location evidence="1">Cytoplasm</location>
    </subcellularLocation>
</comment>
<comment type="domain">
    <text evidence="1">Consists of three domains: the N-terminal catalytic domain, the editing domain and the C-terminal anticodon-binding domain.</text>
</comment>
<comment type="similarity">
    <text evidence="1">Belongs to the class-II aminoacyl-tRNA synthetase family. ProS type 1 subfamily.</text>
</comment>
<dbReference type="EC" id="6.1.1.15" evidence="1"/>
<dbReference type="EMBL" id="CR936503">
    <property type="protein sequence ID" value="CAI55561.1"/>
    <property type="molecule type" value="Genomic_DNA"/>
</dbReference>
<dbReference type="RefSeq" id="WP_011374954.1">
    <property type="nucleotide sequence ID" value="NC_007576.1"/>
</dbReference>
<dbReference type="SMR" id="Q38W72"/>
<dbReference type="STRING" id="314315.LCA_1257"/>
<dbReference type="KEGG" id="lsa:LCA_1257"/>
<dbReference type="eggNOG" id="COG0442">
    <property type="taxonomic scope" value="Bacteria"/>
</dbReference>
<dbReference type="HOGENOM" id="CLU_016739_0_0_9"/>
<dbReference type="OrthoDB" id="9809052at2"/>
<dbReference type="Proteomes" id="UP000002707">
    <property type="component" value="Chromosome"/>
</dbReference>
<dbReference type="GO" id="GO:0005829">
    <property type="term" value="C:cytosol"/>
    <property type="evidence" value="ECO:0007669"/>
    <property type="project" value="TreeGrafter"/>
</dbReference>
<dbReference type="GO" id="GO:0002161">
    <property type="term" value="F:aminoacyl-tRNA deacylase activity"/>
    <property type="evidence" value="ECO:0007669"/>
    <property type="project" value="InterPro"/>
</dbReference>
<dbReference type="GO" id="GO:0005524">
    <property type="term" value="F:ATP binding"/>
    <property type="evidence" value="ECO:0007669"/>
    <property type="project" value="UniProtKB-UniRule"/>
</dbReference>
<dbReference type="GO" id="GO:0140096">
    <property type="term" value="F:catalytic activity, acting on a protein"/>
    <property type="evidence" value="ECO:0007669"/>
    <property type="project" value="UniProtKB-ARBA"/>
</dbReference>
<dbReference type="GO" id="GO:0004827">
    <property type="term" value="F:proline-tRNA ligase activity"/>
    <property type="evidence" value="ECO:0007669"/>
    <property type="project" value="UniProtKB-UniRule"/>
</dbReference>
<dbReference type="GO" id="GO:0016740">
    <property type="term" value="F:transferase activity"/>
    <property type="evidence" value="ECO:0007669"/>
    <property type="project" value="UniProtKB-ARBA"/>
</dbReference>
<dbReference type="GO" id="GO:0006433">
    <property type="term" value="P:prolyl-tRNA aminoacylation"/>
    <property type="evidence" value="ECO:0007669"/>
    <property type="project" value="UniProtKB-UniRule"/>
</dbReference>
<dbReference type="CDD" id="cd04334">
    <property type="entry name" value="ProRS-INS"/>
    <property type="match status" value="1"/>
</dbReference>
<dbReference type="CDD" id="cd00861">
    <property type="entry name" value="ProRS_anticodon_short"/>
    <property type="match status" value="1"/>
</dbReference>
<dbReference type="CDD" id="cd00779">
    <property type="entry name" value="ProRS_core_prok"/>
    <property type="match status" value="1"/>
</dbReference>
<dbReference type="FunFam" id="3.30.930.10:FF:000062">
    <property type="entry name" value="Proline--tRNA ligase"/>
    <property type="match status" value="1"/>
</dbReference>
<dbReference type="FunFam" id="3.30.930.10:FF:000066">
    <property type="entry name" value="Proline--tRNA ligase"/>
    <property type="match status" value="1"/>
</dbReference>
<dbReference type="FunFam" id="3.40.50.800:FF:000011">
    <property type="entry name" value="Proline--tRNA ligase"/>
    <property type="match status" value="1"/>
</dbReference>
<dbReference type="Gene3D" id="3.40.50.800">
    <property type="entry name" value="Anticodon-binding domain"/>
    <property type="match status" value="1"/>
</dbReference>
<dbReference type="Gene3D" id="3.30.930.10">
    <property type="entry name" value="Bira Bifunctional Protein, Domain 2"/>
    <property type="match status" value="2"/>
</dbReference>
<dbReference type="HAMAP" id="MF_01569">
    <property type="entry name" value="Pro_tRNA_synth_type1"/>
    <property type="match status" value="1"/>
</dbReference>
<dbReference type="InterPro" id="IPR002314">
    <property type="entry name" value="aa-tRNA-synt_IIb"/>
</dbReference>
<dbReference type="InterPro" id="IPR006195">
    <property type="entry name" value="aa-tRNA-synth_II"/>
</dbReference>
<dbReference type="InterPro" id="IPR045864">
    <property type="entry name" value="aa-tRNA-synth_II/BPL/LPL"/>
</dbReference>
<dbReference type="InterPro" id="IPR004154">
    <property type="entry name" value="Anticodon-bd"/>
</dbReference>
<dbReference type="InterPro" id="IPR036621">
    <property type="entry name" value="Anticodon-bd_dom_sf"/>
</dbReference>
<dbReference type="InterPro" id="IPR002316">
    <property type="entry name" value="Pro-tRNA-ligase_IIa"/>
</dbReference>
<dbReference type="InterPro" id="IPR004500">
    <property type="entry name" value="Pro-tRNA-synth_IIa_bac-type"/>
</dbReference>
<dbReference type="InterPro" id="IPR023717">
    <property type="entry name" value="Pro-tRNA-Synthase_IIa_type1"/>
</dbReference>
<dbReference type="InterPro" id="IPR050062">
    <property type="entry name" value="Pro-tRNA_synthetase"/>
</dbReference>
<dbReference type="InterPro" id="IPR044140">
    <property type="entry name" value="ProRS_anticodon_short"/>
</dbReference>
<dbReference type="InterPro" id="IPR033730">
    <property type="entry name" value="ProRS_core_prok"/>
</dbReference>
<dbReference type="InterPro" id="IPR036754">
    <property type="entry name" value="YbaK/aa-tRNA-synt-asso_dom_sf"/>
</dbReference>
<dbReference type="InterPro" id="IPR007214">
    <property type="entry name" value="YbaK/aa-tRNA-synth-assoc-dom"/>
</dbReference>
<dbReference type="NCBIfam" id="NF006625">
    <property type="entry name" value="PRK09194.1"/>
    <property type="match status" value="1"/>
</dbReference>
<dbReference type="NCBIfam" id="TIGR00409">
    <property type="entry name" value="proS_fam_II"/>
    <property type="match status" value="1"/>
</dbReference>
<dbReference type="PANTHER" id="PTHR42753">
    <property type="entry name" value="MITOCHONDRIAL RIBOSOME PROTEIN L39/PROLYL-TRNA LIGASE FAMILY MEMBER"/>
    <property type="match status" value="1"/>
</dbReference>
<dbReference type="PANTHER" id="PTHR42753:SF2">
    <property type="entry name" value="PROLINE--TRNA LIGASE"/>
    <property type="match status" value="1"/>
</dbReference>
<dbReference type="Pfam" id="PF03129">
    <property type="entry name" value="HGTP_anticodon"/>
    <property type="match status" value="1"/>
</dbReference>
<dbReference type="Pfam" id="PF00587">
    <property type="entry name" value="tRNA-synt_2b"/>
    <property type="match status" value="1"/>
</dbReference>
<dbReference type="Pfam" id="PF04073">
    <property type="entry name" value="tRNA_edit"/>
    <property type="match status" value="1"/>
</dbReference>
<dbReference type="PRINTS" id="PR01046">
    <property type="entry name" value="TRNASYNTHPRO"/>
</dbReference>
<dbReference type="SUPFAM" id="SSF52954">
    <property type="entry name" value="Class II aaRS ABD-related"/>
    <property type="match status" value="1"/>
</dbReference>
<dbReference type="SUPFAM" id="SSF55681">
    <property type="entry name" value="Class II aaRS and biotin synthetases"/>
    <property type="match status" value="1"/>
</dbReference>
<dbReference type="SUPFAM" id="SSF55826">
    <property type="entry name" value="YbaK/ProRS associated domain"/>
    <property type="match status" value="1"/>
</dbReference>
<dbReference type="PROSITE" id="PS50862">
    <property type="entry name" value="AA_TRNA_LIGASE_II"/>
    <property type="match status" value="1"/>
</dbReference>
<feature type="chain" id="PRO_0000248708" description="Proline--tRNA ligase">
    <location>
        <begin position="1"/>
        <end position="569"/>
    </location>
</feature>
<gene>
    <name evidence="1" type="primary">proS</name>
    <name type="ordered locus">LCA_1257</name>
</gene>